<keyword id="KW-0450">Lipoyl</keyword>
<name>GCSH_ENT38</name>
<reference key="1">
    <citation type="journal article" date="2010" name="PLoS Genet.">
        <title>Genome sequence of the plant growth promoting endophytic bacterium Enterobacter sp. 638.</title>
        <authorList>
            <person name="Taghavi S."/>
            <person name="van der Lelie D."/>
            <person name="Hoffman A."/>
            <person name="Zhang Y.B."/>
            <person name="Walla M.D."/>
            <person name="Vangronsveld J."/>
            <person name="Newman L."/>
            <person name="Monchy S."/>
        </authorList>
    </citation>
    <scope>NUCLEOTIDE SEQUENCE [LARGE SCALE GENOMIC DNA]</scope>
    <source>
        <strain>638</strain>
    </source>
</reference>
<accession>A4WE56</accession>
<sequence>MSNVPAELKYSKEHEWLRKEADGTYTVGITEHAQELLGDMVFVDLPDVGTTVSAGDDCAVAESVKAASDIYAPVSGEIVAVNDALSDSPELVNSDPYTDGWIFKIRAADEAEVEALLDATAYAALLENE</sequence>
<feature type="chain" id="PRO_1000059181" description="Glycine cleavage system H protein">
    <location>
        <begin position="1"/>
        <end position="129"/>
    </location>
</feature>
<feature type="domain" description="Lipoyl-binding" evidence="2">
    <location>
        <begin position="24"/>
        <end position="106"/>
    </location>
</feature>
<feature type="modified residue" description="N6-lipoyllysine" evidence="1">
    <location>
        <position position="65"/>
    </location>
</feature>
<proteinExistence type="inferred from homology"/>
<organism>
    <name type="scientific">Enterobacter sp. (strain 638)</name>
    <dbReference type="NCBI Taxonomy" id="399742"/>
    <lineage>
        <taxon>Bacteria</taxon>
        <taxon>Pseudomonadati</taxon>
        <taxon>Pseudomonadota</taxon>
        <taxon>Gammaproteobacteria</taxon>
        <taxon>Enterobacterales</taxon>
        <taxon>Enterobacteriaceae</taxon>
        <taxon>Enterobacter</taxon>
    </lineage>
</organism>
<protein>
    <recommendedName>
        <fullName evidence="1">Glycine cleavage system H protein</fullName>
    </recommendedName>
</protein>
<evidence type="ECO:0000255" key="1">
    <source>
        <dbReference type="HAMAP-Rule" id="MF_00272"/>
    </source>
</evidence>
<evidence type="ECO:0000255" key="2">
    <source>
        <dbReference type="PROSITE-ProRule" id="PRU01066"/>
    </source>
</evidence>
<dbReference type="EMBL" id="CP000653">
    <property type="protein sequence ID" value="ABP61986.1"/>
    <property type="molecule type" value="Genomic_DNA"/>
</dbReference>
<dbReference type="RefSeq" id="WP_015960314.1">
    <property type="nucleotide sequence ID" value="NC_009436.1"/>
</dbReference>
<dbReference type="SMR" id="A4WE56"/>
<dbReference type="STRING" id="399742.Ent638_3323"/>
<dbReference type="GeneID" id="93306289"/>
<dbReference type="KEGG" id="ent:Ent638_3323"/>
<dbReference type="eggNOG" id="COG0509">
    <property type="taxonomic scope" value="Bacteria"/>
</dbReference>
<dbReference type="HOGENOM" id="CLU_097408_2_1_6"/>
<dbReference type="OrthoDB" id="9796712at2"/>
<dbReference type="Proteomes" id="UP000000230">
    <property type="component" value="Chromosome"/>
</dbReference>
<dbReference type="GO" id="GO:0005829">
    <property type="term" value="C:cytosol"/>
    <property type="evidence" value="ECO:0007669"/>
    <property type="project" value="TreeGrafter"/>
</dbReference>
<dbReference type="GO" id="GO:0005960">
    <property type="term" value="C:glycine cleavage complex"/>
    <property type="evidence" value="ECO:0007669"/>
    <property type="project" value="InterPro"/>
</dbReference>
<dbReference type="GO" id="GO:0019464">
    <property type="term" value="P:glycine decarboxylation via glycine cleavage system"/>
    <property type="evidence" value="ECO:0007669"/>
    <property type="project" value="UniProtKB-UniRule"/>
</dbReference>
<dbReference type="CDD" id="cd06848">
    <property type="entry name" value="GCS_H"/>
    <property type="match status" value="1"/>
</dbReference>
<dbReference type="FunFam" id="2.40.50.100:FF:000011">
    <property type="entry name" value="Glycine cleavage system H protein"/>
    <property type="match status" value="1"/>
</dbReference>
<dbReference type="Gene3D" id="2.40.50.100">
    <property type="match status" value="1"/>
</dbReference>
<dbReference type="HAMAP" id="MF_00272">
    <property type="entry name" value="GcvH"/>
    <property type="match status" value="1"/>
</dbReference>
<dbReference type="InterPro" id="IPR003016">
    <property type="entry name" value="2-oxoA_DH_lipoyl-BS"/>
</dbReference>
<dbReference type="InterPro" id="IPR000089">
    <property type="entry name" value="Biotin_lipoyl"/>
</dbReference>
<dbReference type="InterPro" id="IPR002930">
    <property type="entry name" value="GCV_H"/>
</dbReference>
<dbReference type="InterPro" id="IPR033753">
    <property type="entry name" value="GCV_H/Fam206"/>
</dbReference>
<dbReference type="InterPro" id="IPR017453">
    <property type="entry name" value="GCV_H_sub"/>
</dbReference>
<dbReference type="InterPro" id="IPR011053">
    <property type="entry name" value="Single_hybrid_motif"/>
</dbReference>
<dbReference type="NCBIfam" id="TIGR00527">
    <property type="entry name" value="gcvH"/>
    <property type="match status" value="1"/>
</dbReference>
<dbReference type="NCBIfam" id="NF002270">
    <property type="entry name" value="PRK01202.1"/>
    <property type="match status" value="1"/>
</dbReference>
<dbReference type="PANTHER" id="PTHR11715">
    <property type="entry name" value="GLYCINE CLEAVAGE SYSTEM H PROTEIN"/>
    <property type="match status" value="1"/>
</dbReference>
<dbReference type="PANTHER" id="PTHR11715:SF3">
    <property type="entry name" value="GLYCINE CLEAVAGE SYSTEM H PROTEIN-RELATED"/>
    <property type="match status" value="1"/>
</dbReference>
<dbReference type="Pfam" id="PF01597">
    <property type="entry name" value="GCV_H"/>
    <property type="match status" value="1"/>
</dbReference>
<dbReference type="SUPFAM" id="SSF51230">
    <property type="entry name" value="Single hybrid motif"/>
    <property type="match status" value="1"/>
</dbReference>
<dbReference type="PROSITE" id="PS50968">
    <property type="entry name" value="BIOTINYL_LIPOYL"/>
    <property type="match status" value="1"/>
</dbReference>
<dbReference type="PROSITE" id="PS00189">
    <property type="entry name" value="LIPOYL"/>
    <property type="match status" value="1"/>
</dbReference>
<comment type="function">
    <text evidence="1">The glycine cleavage system catalyzes the degradation of glycine. The H protein shuttles the methylamine group of glycine from the P protein to the T protein.</text>
</comment>
<comment type="cofactor">
    <cofactor evidence="1">
        <name>(R)-lipoate</name>
        <dbReference type="ChEBI" id="CHEBI:83088"/>
    </cofactor>
    <text evidence="1">Binds 1 lipoyl cofactor covalently.</text>
</comment>
<comment type="subunit">
    <text evidence="1">The glycine cleavage system is composed of four proteins: P, T, L and H.</text>
</comment>
<comment type="similarity">
    <text evidence="1">Belongs to the GcvH family.</text>
</comment>
<gene>
    <name evidence="1" type="primary">gcvH</name>
    <name type="ordered locus">Ent638_3323</name>
</gene>